<feature type="chain" id="PRO_0000300797" description="Homoserine kinase">
    <location>
        <begin position="1"/>
        <end position="316"/>
    </location>
</feature>
<organism>
    <name type="scientific">Pseudomonas aeruginosa (strain UCBPP-PA14)</name>
    <dbReference type="NCBI Taxonomy" id="208963"/>
    <lineage>
        <taxon>Bacteria</taxon>
        <taxon>Pseudomonadati</taxon>
        <taxon>Pseudomonadota</taxon>
        <taxon>Gammaproteobacteria</taxon>
        <taxon>Pseudomonadales</taxon>
        <taxon>Pseudomonadaceae</taxon>
        <taxon>Pseudomonas</taxon>
    </lineage>
</organism>
<accession>Q02DL4</accession>
<protein>
    <recommendedName>
        <fullName evidence="1">Homoserine kinase</fullName>
        <shortName evidence="1">HK</shortName>
        <shortName evidence="1">HSK</shortName>
        <ecNumber evidence="1">2.7.1.39</ecNumber>
    </recommendedName>
</protein>
<evidence type="ECO:0000255" key="1">
    <source>
        <dbReference type="HAMAP-Rule" id="MF_00301"/>
    </source>
</evidence>
<gene>
    <name evidence="1" type="primary">thrB</name>
    <name type="ordered locus">PA14_72510</name>
</gene>
<sequence>MSVFTPLERSTLEAFLAPYDLGRLRDFRGIAEGSENSNFFVSLEHGEFVLTLVERGPVQDLPFFIELLDVLHEDGLPVPYALRTRDGEALRRLEGKPALLQPRLAGRHERQPNAHHCQEVGDLLGHLHAATRGRILERPSDRGLPWMLEQGANLAPRLPEQARALLAPALAEIAALDAERPALPRANLHADLFRDNVLFDGPHLAGLIDFYNACSGWMLYDLAITLNDWCSNADGSLDPARARALLAAYANRRPFTALEAEHWPSMLRVACVRFWLSRLIAAEAFAGQDVLIHDPAEFEMRLAQRQNVEIHLPFAL</sequence>
<proteinExistence type="inferred from homology"/>
<name>KHSE_PSEAB</name>
<keyword id="KW-0028">Amino-acid biosynthesis</keyword>
<keyword id="KW-0067">ATP-binding</keyword>
<keyword id="KW-0418">Kinase</keyword>
<keyword id="KW-0547">Nucleotide-binding</keyword>
<keyword id="KW-0791">Threonine biosynthesis</keyword>
<keyword id="KW-0808">Transferase</keyword>
<comment type="catalytic activity">
    <reaction evidence="1">
        <text>L-homoserine + ATP = O-phospho-L-homoserine + ADP + H(+)</text>
        <dbReference type="Rhea" id="RHEA:13985"/>
        <dbReference type="ChEBI" id="CHEBI:15378"/>
        <dbReference type="ChEBI" id="CHEBI:30616"/>
        <dbReference type="ChEBI" id="CHEBI:57476"/>
        <dbReference type="ChEBI" id="CHEBI:57590"/>
        <dbReference type="ChEBI" id="CHEBI:456216"/>
        <dbReference type="EC" id="2.7.1.39"/>
    </reaction>
</comment>
<comment type="pathway">
    <text evidence="1">Amino-acid biosynthesis; L-threonine biosynthesis; L-threonine from L-aspartate: step 4/5.</text>
</comment>
<comment type="similarity">
    <text evidence="1">Belongs to the pseudomonas-type ThrB family.</text>
</comment>
<reference key="1">
    <citation type="journal article" date="2006" name="Genome Biol.">
        <title>Genomic analysis reveals that Pseudomonas aeruginosa virulence is combinatorial.</title>
        <authorList>
            <person name="Lee D.G."/>
            <person name="Urbach J.M."/>
            <person name="Wu G."/>
            <person name="Liberati N.T."/>
            <person name="Feinbaum R.L."/>
            <person name="Miyata S."/>
            <person name="Diggins L.T."/>
            <person name="He J."/>
            <person name="Saucier M."/>
            <person name="Deziel E."/>
            <person name="Friedman L."/>
            <person name="Li L."/>
            <person name="Grills G."/>
            <person name="Montgomery K."/>
            <person name="Kucherlapati R."/>
            <person name="Rahme L.G."/>
            <person name="Ausubel F.M."/>
        </authorList>
    </citation>
    <scope>NUCLEOTIDE SEQUENCE [LARGE SCALE GENOMIC DNA]</scope>
    <source>
        <strain>UCBPP-PA14</strain>
    </source>
</reference>
<dbReference type="EC" id="2.7.1.39" evidence="1"/>
<dbReference type="EMBL" id="CP000438">
    <property type="protein sequence ID" value="ABJ14881.1"/>
    <property type="molecule type" value="Genomic_DNA"/>
</dbReference>
<dbReference type="RefSeq" id="WP_003110565.1">
    <property type="nucleotide sequence ID" value="NZ_CP034244.1"/>
</dbReference>
<dbReference type="SMR" id="Q02DL4"/>
<dbReference type="KEGG" id="pau:PA14_72510"/>
<dbReference type="PseudoCAP" id="PA14_72510"/>
<dbReference type="HOGENOM" id="CLU_053300_0_0_6"/>
<dbReference type="BioCyc" id="PAER208963:G1G74-6101-MONOMER"/>
<dbReference type="UniPathway" id="UPA00050">
    <property type="reaction ID" value="UER00064"/>
</dbReference>
<dbReference type="Proteomes" id="UP000000653">
    <property type="component" value="Chromosome"/>
</dbReference>
<dbReference type="GO" id="GO:0005524">
    <property type="term" value="F:ATP binding"/>
    <property type="evidence" value="ECO:0007669"/>
    <property type="project" value="UniProtKB-KW"/>
</dbReference>
<dbReference type="GO" id="GO:0004413">
    <property type="term" value="F:homoserine kinase activity"/>
    <property type="evidence" value="ECO:0007669"/>
    <property type="project" value="UniProtKB-UniRule"/>
</dbReference>
<dbReference type="GO" id="GO:0009088">
    <property type="term" value="P:threonine biosynthetic process"/>
    <property type="evidence" value="ECO:0007669"/>
    <property type="project" value="UniProtKB-UniRule"/>
</dbReference>
<dbReference type="CDD" id="cd05153">
    <property type="entry name" value="HomoserineK_II"/>
    <property type="match status" value="1"/>
</dbReference>
<dbReference type="Gene3D" id="3.90.1200.10">
    <property type="match status" value="1"/>
</dbReference>
<dbReference type="Gene3D" id="3.30.200.20">
    <property type="entry name" value="Phosphorylase Kinase, domain 1"/>
    <property type="match status" value="1"/>
</dbReference>
<dbReference type="HAMAP" id="MF_00301">
    <property type="entry name" value="Homoser_kinase_2"/>
    <property type="match status" value="1"/>
</dbReference>
<dbReference type="InterPro" id="IPR002575">
    <property type="entry name" value="Aminoglycoside_PTrfase"/>
</dbReference>
<dbReference type="InterPro" id="IPR005280">
    <property type="entry name" value="Homoserine_kinase_II"/>
</dbReference>
<dbReference type="InterPro" id="IPR011009">
    <property type="entry name" value="Kinase-like_dom_sf"/>
</dbReference>
<dbReference type="InterPro" id="IPR050249">
    <property type="entry name" value="Pseudomonas-type_ThrB"/>
</dbReference>
<dbReference type="NCBIfam" id="NF003558">
    <property type="entry name" value="PRK05231.1"/>
    <property type="match status" value="1"/>
</dbReference>
<dbReference type="NCBIfam" id="TIGR00938">
    <property type="entry name" value="thrB_alt"/>
    <property type="match status" value="1"/>
</dbReference>
<dbReference type="PANTHER" id="PTHR21064:SF6">
    <property type="entry name" value="AMINOGLYCOSIDE PHOSPHOTRANSFERASE DOMAIN-CONTAINING PROTEIN"/>
    <property type="match status" value="1"/>
</dbReference>
<dbReference type="PANTHER" id="PTHR21064">
    <property type="entry name" value="AMINOGLYCOSIDE PHOSPHOTRANSFERASE DOMAIN-CONTAINING PROTEIN-RELATED"/>
    <property type="match status" value="1"/>
</dbReference>
<dbReference type="Pfam" id="PF01636">
    <property type="entry name" value="APH"/>
    <property type="match status" value="1"/>
</dbReference>
<dbReference type="SUPFAM" id="SSF56112">
    <property type="entry name" value="Protein kinase-like (PK-like)"/>
    <property type="match status" value="1"/>
</dbReference>